<name>MERT_STAAU</name>
<comment type="function">
    <text>Involved in mercuric transport. Passes a mercury ion from the MerP protein to the mercuric reductase MerA.</text>
</comment>
<comment type="subcellular location">
    <subcellularLocation>
        <location>Cell membrane</location>
        <topology>Multi-pass membrane protein</topology>
    </subcellularLocation>
</comment>
<gene>
    <name type="primary">merT</name>
</gene>
<sequence length="128" mass="14182">MYLNQRIKFFLERVVRMMDENRSKGNRWGVWAFFGILLVPLLVPLLCCAGPILLVALGSTGIGALFAGATGNWWLTGIFAALAIVMIALILSKLLKNKYNSPEGNGKTKNKTDCCTPPESVDRKHETR</sequence>
<accession>P08656</accession>
<geneLocation type="plasmid">
    <name>pI258</name>
</geneLocation>
<dbReference type="EMBL" id="L29436">
    <property type="protein sequence ID" value="AAA98244.1"/>
    <property type="molecule type" value="Genomic_DNA"/>
</dbReference>
<dbReference type="PIR" id="D29504">
    <property type="entry name" value="D29504"/>
</dbReference>
<dbReference type="RefSeq" id="WP_001794630.1">
    <property type="nucleotide sequence ID" value="NZ_WBTO01000038.1"/>
</dbReference>
<dbReference type="RefSeq" id="YP_006938629.1">
    <property type="nucleotide sequence ID" value="NC_013347.1"/>
</dbReference>
<dbReference type="SMR" id="P08656"/>
<dbReference type="GO" id="GO:0005886">
    <property type="term" value="C:plasma membrane"/>
    <property type="evidence" value="ECO:0007669"/>
    <property type="project" value="UniProtKB-SubCell"/>
</dbReference>
<dbReference type="GO" id="GO:0046872">
    <property type="term" value="F:metal ion binding"/>
    <property type="evidence" value="ECO:0007669"/>
    <property type="project" value="UniProtKB-KW"/>
</dbReference>
<dbReference type="GO" id="GO:0046689">
    <property type="term" value="P:response to mercury ion"/>
    <property type="evidence" value="ECO:0007669"/>
    <property type="project" value="UniProtKB-KW"/>
</dbReference>
<evidence type="ECO:0000255" key="1"/>
<evidence type="ECO:0000256" key="2">
    <source>
        <dbReference type="SAM" id="MobiDB-lite"/>
    </source>
</evidence>
<keyword id="KW-1003">Cell membrane</keyword>
<keyword id="KW-0472">Membrane</keyword>
<keyword id="KW-0475">Mercuric resistance</keyword>
<keyword id="KW-0476">Mercury</keyword>
<keyword id="KW-0479">Metal-binding</keyword>
<keyword id="KW-0614">Plasmid</keyword>
<keyword id="KW-0812">Transmembrane</keyword>
<keyword id="KW-1133">Transmembrane helix</keyword>
<keyword id="KW-0813">Transport</keyword>
<feature type="chain" id="PRO_0000096436" description="Mercuric transport protein">
    <location>
        <begin position="1"/>
        <end position="128"/>
    </location>
</feature>
<feature type="transmembrane region" description="Helical" evidence="1">
    <location>
        <begin position="28"/>
        <end position="48"/>
    </location>
</feature>
<feature type="transmembrane region" description="Helical" evidence="1">
    <location>
        <begin position="71"/>
        <end position="91"/>
    </location>
</feature>
<feature type="region of interest" description="Disordered" evidence="2">
    <location>
        <begin position="101"/>
        <end position="128"/>
    </location>
</feature>
<feature type="binding site" evidence="1">
    <location>
        <position position="47"/>
    </location>
    <ligand>
        <name>Hg(2+)</name>
        <dbReference type="ChEBI" id="CHEBI:16793"/>
    </ligand>
</feature>
<feature type="binding site" evidence="1">
    <location>
        <position position="48"/>
    </location>
    <ligand>
        <name>Hg(2+)</name>
        <dbReference type="ChEBI" id="CHEBI:16793"/>
    </ligand>
</feature>
<feature type="binding site" evidence="1">
    <location>
        <position position="114"/>
    </location>
    <ligand>
        <name>Hg(2+)</name>
        <dbReference type="ChEBI" id="CHEBI:16793"/>
    </ligand>
</feature>
<feature type="binding site" evidence="1">
    <location>
        <position position="115"/>
    </location>
    <ligand>
        <name>Hg(2+)</name>
        <dbReference type="ChEBI" id="CHEBI:16793"/>
    </ligand>
</feature>
<reference key="1">
    <citation type="journal article" date="1987" name="Proc. Natl. Acad. Sci. U.S.A.">
        <title>Nucleotide sequence and expression of the mercurial-resistance operon from Staphylococcus aureus plasmid pI258.</title>
        <authorList>
            <person name="Laddaga R.A."/>
            <person name="Chu L."/>
            <person name="Misra T.K."/>
            <person name="Silver S."/>
        </authorList>
    </citation>
    <scope>NUCLEOTIDE SEQUENCE [GENOMIC DNA]</scope>
</reference>
<protein>
    <recommendedName>
        <fullName>Mercuric transport protein</fullName>
    </recommendedName>
    <alternativeName>
        <fullName>Mercury ion transport protein</fullName>
    </alternativeName>
</protein>
<proteinExistence type="predicted"/>
<organism>
    <name type="scientific">Staphylococcus aureus</name>
    <dbReference type="NCBI Taxonomy" id="1280"/>
    <lineage>
        <taxon>Bacteria</taxon>
        <taxon>Bacillati</taxon>
        <taxon>Bacillota</taxon>
        <taxon>Bacilli</taxon>
        <taxon>Bacillales</taxon>
        <taxon>Staphylococcaceae</taxon>
        <taxon>Staphylococcus</taxon>
    </lineage>
</organism>